<feature type="chain" id="PRO_0000242460" description="Large ribosomal subunit protein uL4">
    <location>
        <begin position="1"/>
        <end position="204"/>
    </location>
</feature>
<feature type="region of interest" description="Disordered" evidence="2">
    <location>
        <begin position="53"/>
        <end position="77"/>
    </location>
</feature>
<feature type="compositionally biased region" description="Polar residues" evidence="2">
    <location>
        <begin position="56"/>
        <end position="67"/>
    </location>
</feature>
<reference key="1">
    <citation type="journal article" date="2005" name="PLoS Biol.">
        <title>The Wolbachia genome of Brugia malayi: endosymbiont evolution within a human pathogenic nematode.</title>
        <authorList>
            <person name="Foster J."/>
            <person name="Ganatra M."/>
            <person name="Kamal I."/>
            <person name="Ware J."/>
            <person name="Makarova K."/>
            <person name="Ivanova N."/>
            <person name="Bhattacharyya A."/>
            <person name="Kapatral V."/>
            <person name="Kumar S."/>
            <person name="Posfai J."/>
            <person name="Vincze T."/>
            <person name="Ingram J."/>
            <person name="Moran L."/>
            <person name="Lapidus A."/>
            <person name="Omelchenko M."/>
            <person name="Kyrpides N."/>
            <person name="Ghedin E."/>
            <person name="Wang S."/>
            <person name="Goltsman E."/>
            <person name="Joukov V."/>
            <person name="Ostrovskaya O."/>
            <person name="Tsukerman K."/>
            <person name="Mazur M."/>
            <person name="Comb D."/>
            <person name="Koonin E."/>
            <person name="Slatko B."/>
        </authorList>
    </citation>
    <scope>NUCLEOTIDE SEQUENCE [LARGE SCALE GENOMIC DNA]</scope>
    <source>
        <strain>TRS</strain>
    </source>
</reference>
<sequence length="204" mass="23075">MECKLVNLSNNDVGTTQLNPLIFSVEQKLSILHDIVRWQLAKRRAGTHKVKGISDVSGTTAKPYSQKRTGRARQGSLRSPQFRGGGVIFGPIVRSHAYSLNKKVRKFGLKVALSLKYLNNQVIILNNLNINVKKTSEMCKYIQNFKFSSFLIVGDYEDSLLRAARNLHYVNLIKPIGLNVFDILNHECIMLTSDALRYLEGRLL</sequence>
<name>RL4_WOLTR</name>
<evidence type="ECO:0000255" key="1">
    <source>
        <dbReference type="HAMAP-Rule" id="MF_01328"/>
    </source>
</evidence>
<evidence type="ECO:0000256" key="2">
    <source>
        <dbReference type="SAM" id="MobiDB-lite"/>
    </source>
</evidence>
<evidence type="ECO:0000305" key="3"/>
<organism>
    <name type="scientific">Wolbachia sp. subsp. Brugia malayi (strain TRS)</name>
    <dbReference type="NCBI Taxonomy" id="292805"/>
    <lineage>
        <taxon>Bacteria</taxon>
        <taxon>Pseudomonadati</taxon>
        <taxon>Pseudomonadota</taxon>
        <taxon>Alphaproteobacteria</taxon>
        <taxon>Rickettsiales</taxon>
        <taxon>Anaplasmataceae</taxon>
        <taxon>Wolbachieae</taxon>
        <taxon>Wolbachia</taxon>
    </lineage>
</organism>
<accession>Q5GSU5</accession>
<proteinExistence type="inferred from homology"/>
<dbReference type="EMBL" id="AE017321">
    <property type="protein sequence ID" value="AAW70929.1"/>
    <property type="molecule type" value="Genomic_DNA"/>
</dbReference>
<dbReference type="RefSeq" id="WP_011256539.1">
    <property type="nucleotide sequence ID" value="NC_006833.1"/>
</dbReference>
<dbReference type="SMR" id="Q5GSU5"/>
<dbReference type="STRING" id="292805.Wbm0340"/>
<dbReference type="KEGG" id="wbm:Wbm0340"/>
<dbReference type="eggNOG" id="COG0088">
    <property type="taxonomic scope" value="Bacteria"/>
</dbReference>
<dbReference type="HOGENOM" id="CLU_041575_5_1_5"/>
<dbReference type="Proteomes" id="UP000000534">
    <property type="component" value="Chromosome"/>
</dbReference>
<dbReference type="GO" id="GO:1990904">
    <property type="term" value="C:ribonucleoprotein complex"/>
    <property type="evidence" value="ECO:0007669"/>
    <property type="project" value="UniProtKB-KW"/>
</dbReference>
<dbReference type="GO" id="GO:0005840">
    <property type="term" value="C:ribosome"/>
    <property type="evidence" value="ECO:0007669"/>
    <property type="project" value="UniProtKB-KW"/>
</dbReference>
<dbReference type="GO" id="GO:0019843">
    <property type="term" value="F:rRNA binding"/>
    <property type="evidence" value="ECO:0007669"/>
    <property type="project" value="UniProtKB-UniRule"/>
</dbReference>
<dbReference type="GO" id="GO:0003735">
    <property type="term" value="F:structural constituent of ribosome"/>
    <property type="evidence" value="ECO:0007669"/>
    <property type="project" value="InterPro"/>
</dbReference>
<dbReference type="GO" id="GO:0006412">
    <property type="term" value="P:translation"/>
    <property type="evidence" value="ECO:0007669"/>
    <property type="project" value="UniProtKB-UniRule"/>
</dbReference>
<dbReference type="Gene3D" id="3.40.1370.10">
    <property type="match status" value="1"/>
</dbReference>
<dbReference type="HAMAP" id="MF_01328_B">
    <property type="entry name" value="Ribosomal_uL4_B"/>
    <property type="match status" value="1"/>
</dbReference>
<dbReference type="InterPro" id="IPR002136">
    <property type="entry name" value="Ribosomal_uL4"/>
</dbReference>
<dbReference type="InterPro" id="IPR013005">
    <property type="entry name" value="Ribosomal_uL4-like"/>
</dbReference>
<dbReference type="InterPro" id="IPR023574">
    <property type="entry name" value="Ribosomal_uL4_dom_sf"/>
</dbReference>
<dbReference type="NCBIfam" id="TIGR03953">
    <property type="entry name" value="rplD_bact"/>
    <property type="match status" value="1"/>
</dbReference>
<dbReference type="PANTHER" id="PTHR10746">
    <property type="entry name" value="50S RIBOSOMAL PROTEIN L4"/>
    <property type="match status" value="1"/>
</dbReference>
<dbReference type="PANTHER" id="PTHR10746:SF6">
    <property type="entry name" value="LARGE RIBOSOMAL SUBUNIT PROTEIN UL4M"/>
    <property type="match status" value="1"/>
</dbReference>
<dbReference type="Pfam" id="PF00573">
    <property type="entry name" value="Ribosomal_L4"/>
    <property type="match status" value="1"/>
</dbReference>
<dbReference type="SUPFAM" id="SSF52166">
    <property type="entry name" value="Ribosomal protein L4"/>
    <property type="match status" value="1"/>
</dbReference>
<comment type="function">
    <text evidence="1">One of the primary rRNA binding proteins, this protein initially binds near the 5'-end of the 23S rRNA. It is important during the early stages of 50S assembly. It makes multiple contacts with different domains of the 23S rRNA in the assembled 50S subunit and ribosome.</text>
</comment>
<comment type="function">
    <text evidence="1">Forms part of the polypeptide exit tunnel.</text>
</comment>
<comment type="subunit">
    <text evidence="1">Part of the 50S ribosomal subunit.</text>
</comment>
<comment type="similarity">
    <text evidence="1">Belongs to the universal ribosomal protein uL4 family.</text>
</comment>
<gene>
    <name evidence="1" type="primary">rplD</name>
    <name type="ordered locus">Wbm0340</name>
</gene>
<protein>
    <recommendedName>
        <fullName evidence="1">Large ribosomal subunit protein uL4</fullName>
    </recommendedName>
    <alternativeName>
        <fullName evidence="3">50S ribosomal protein L4</fullName>
    </alternativeName>
</protein>
<keyword id="KW-1185">Reference proteome</keyword>
<keyword id="KW-0687">Ribonucleoprotein</keyword>
<keyword id="KW-0689">Ribosomal protein</keyword>
<keyword id="KW-0694">RNA-binding</keyword>
<keyword id="KW-0699">rRNA-binding</keyword>